<protein>
    <recommendedName>
        <fullName evidence="1">Deoxyguanosinetriphosphate triphosphohydrolase</fullName>
        <shortName evidence="1">dGTP triphosphohydrolase</shortName>
        <shortName evidence="1">dGTPase</shortName>
        <ecNumber evidence="1">3.1.5.1</ecNumber>
    </recommendedName>
</protein>
<keyword id="KW-0378">Hydrolase</keyword>
<keyword id="KW-0460">Magnesium</keyword>
<sequence>MAQIDFRKKINWHRRYRSPQGVKTEHEILRIFESDRGRIINSPAIRRLQQKTQVFPLERNAAVRTRLTHSMEVQQVGRYIAKEILSRLKELKLLEAYGLDELTGPFESIVEMSCLMHDIGNPPFGHFGEAAINDWFRQRLHPEDAESQPLTDDRCSVAALRLRDGEEPLNELRRKIRQDLCHFEGNAQGIRLVHTLMRMNLTWAQVGGILKYTRPAWWRGETPETHHYLMKKPGYYLSEEAYIARLRKELNLALYSRFPLTWIMEAADDISYCVADLEDAVEKRIFTVEQLYHHLHEAWGQHEKGSLFSLVVENAWEKSRSNSLSRSTEDQFFMYLRVNTLNKLVPYAAQRFIDNLPAIFAGTFNHALLEDASECSDLLKLYKNVAVKHVFSHPDVEQLELQGYRVISGLLEIYRPLLSLSLSDFTELVEKERVKRFPIESRLFHKLSTRHRLAYVEAVSKLPSDSPEFPLWEYYYRCRLLQDYISGMTDLYAWDEYRRLMAVEQ</sequence>
<accession>Q0T846</accession>
<proteinExistence type="inferred from homology"/>
<gene>
    <name evidence="1" type="primary">dgt</name>
    <name type="ordered locus">SFV_0145</name>
</gene>
<evidence type="ECO:0000255" key="1">
    <source>
        <dbReference type="HAMAP-Rule" id="MF_00030"/>
    </source>
</evidence>
<evidence type="ECO:0000255" key="2">
    <source>
        <dbReference type="PROSITE-ProRule" id="PRU01175"/>
    </source>
</evidence>
<organism>
    <name type="scientific">Shigella flexneri serotype 5b (strain 8401)</name>
    <dbReference type="NCBI Taxonomy" id="373384"/>
    <lineage>
        <taxon>Bacteria</taxon>
        <taxon>Pseudomonadati</taxon>
        <taxon>Pseudomonadota</taxon>
        <taxon>Gammaproteobacteria</taxon>
        <taxon>Enterobacterales</taxon>
        <taxon>Enterobacteriaceae</taxon>
        <taxon>Shigella</taxon>
    </lineage>
</organism>
<name>DGTP_SHIF8</name>
<comment type="function">
    <text evidence="1">dGTPase preferentially hydrolyzes dGTP over the other canonical NTPs.</text>
</comment>
<comment type="catalytic activity">
    <reaction evidence="1">
        <text>dGTP + H2O = 2'-deoxyguanosine + triphosphate + H(+)</text>
        <dbReference type="Rhea" id="RHEA:15193"/>
        <dbReference type="ChEBI" id="CHEBI:15377"/>
        <dbReference type="ChEBI" id="CHEBI:15378"/>
        <dbReference type="ChEBI" id="CHEBI:17172"/>
        <dbReference type="ChEBI" id="CHEBI:18036"/>
        <dbReference type="ChEBI" id="CHEBI:61429"/>
        <dbReference type="EC" id="3.1.5.1"/>
    </reaction>
</comment>
<comment type="cofactor">
    <cofactor evidence="1">
        <name>Mg(2+)</name>
        <dbReference type="ChEBI" id="CHEBI:18420"/>
    </cofactor>
</comment>
<comment type="subunit">
    <text evidence="1">Homotetramer.</text>
</comment>
<comment type="similarity">
    <text evidence="1">Belongs to the dGTPase family. Type 1 subfamily.</text>
</comment>
<reference key="1">
    <citation type="journal article" date="2006" name="BMC Genomics">
        <title>Complete genome sequence of Shigella flexneri 5b and comparison with Shigella flexneri 2a.</title>
        <authorList>
            <person name="Nie H."/>
            <person name="Yang F."/>
            <person name="Zhang X."/>
            <person name="Yang J."/>
            <person name="Chen L."/>
            <person name="Wang J."/>
            <person name="Xiong Z."/>
            <person name="Peng J."/>
            <person name="Sun L."/>
            <person name="Dong J."/>
            <person name="Xue Y."/>
            <person name="Xu X."/>
            <person name="Chen S."/>
            <person name="Yao Z."/>
            <person name="Shen Y."/>
            <person name="Jin Q."/>
        </authorList>
    </citation>
    <scope>NUCLEOTIDE SEQUENCE [LARGE SCALE GENOMIC DNA]</scope>
    <source>
        <strain>8401</strain>
    </source>
</reference>
<dbReference type="EC" id="3.1.5.1" evidence="1"/>
<dbReference type="EMBL" id="CP000266">
    <property type="protein sequence ID" value="ABF02430.1"/>
    <property type="molecule type" value="Genomic_DNA"/>
</dbReference>
<dbReference type="RefSeq" id="WP_000057067.1">
    <property type="nucleotide sequence ID" value="NC_008258.1"/>
</dbReference>
<dbReference type="SMR" id="Q0T846"/>
<dbReference type="KEGG" id="sfv:SFV_0145"/>
<dbReference type="HOGENOM" id="CLU_028163_2_1_6"/>
<dbReference type="Proteomes" id="UP000000659">
    <property type="component" value="Chromosome"/>
</dbReference>
<dbReference type="GO" id="GO:0008832">
    <property type="term" value="F:dGTPase activity"/>
    <property type="evidence" value="ECO:0007669"/>
    <property type="project" value="UniProtKB-UniRule"/>
</dbReference>
<dbReference type="GO" id="GO:0000287">
    <property type="term" value="F:magnesium ion binding"/>
    <property type="evidence" value="ECO:0007669"/>
    <property type="project" value="UniProtKB-UniRule"/>
</dbReference>
<dbReference type="GO" id="GO:0006203">
    <property type="term" value="P:dGTP catabolic process"/>
    <property type="evidence" value="ECO:0007669"/>
    <property type="project" value="InterPro"/>
</dbReference>
<dbReference type="CDD" id="cd00077">
    <property type="entry name" value="HDc"/>
    <property type="match status" value="1"/>
</dbReference>
<dbReference type="FunFam" id="1.10.3210.10:FF:000009">
    <property type="entry name" value="Deoxyguanosinetriphosphate triphosphohydrolase"/>
    <property type="match status" value="1"/>
</dbReference>
<dbReference type="FunFam" id="1.10.3210.10:FF:000010">
    <property type="entry name" value="Deoxyguanosinetriphosphate triphosphohydrolase"/>
    <property type="match status" value="1"/>
</dbReference>
<dbReference type="FunFam" id="1.10.3410.10:FF:000001">
    <property type="entry name" value="Deoxyguanosinetriphosphate triphosphohydrolase"/>
    <property type="match status" value="1"/>
</dbReference>
<dbReference type="Gene3D" id="1.10.3210.10">
    <property type="entry name" value="Hypothetical protein af1432"/>
    <property type="match status" value="2"/>
</dbReference>
<dbReference type="Gene3D" id="1.10.3410.10">
    <property type="entry name" value="putative deoxyguanosinetriphosphate triphosphohydrolase like domain"/>
    <property type="match status" value="1"/>
</dbReference>
<dbReference type="HAMAP" id="MF_00030">
    <property type="entry name" value="dGTPase_type1"/>
    <property type="match status" value="1"/>
</dbReference>
<dbReference type="InterPro" id="IPR023293">
    <property type="entry name" value="dGTP_triP_hydro_central_sf"/>
</dbReference>
<dbReference type="InterPro" id="IPR006261">
    <property type="entry name" value="dGTPase"/>
</dbReference>
<dbReference type="InterPro" id="IPR050135">
    <property type="entry name" value="dGTPase-like"/>
</dbReference>
<dbReference type="InterPro" id="IPR020779">
    <property type="entry name" value="dNTPase_1"/>
</dbReference>
<dbReference type="InterPro" id="IPR003607">
    <property type="entry name" value="HD/PDEase_dom"/>
</dbReference>
<dbReference type="InterPro" id="IPR006674">
    <property type="entry name" value="HD_domain"/>
</dbReference>
<dbReference type="NCBIfam" id="TIGR01353">
    <property type="entry name" value="dGTP_triPase"/>
    <property type="match status" value="1"/>
</dbReference>
<dbReference type="NCBIfam" id="NF003429">
    <property type="entry name" value="PRK04926.1"/>
    <property type="match status" value="1"/>
</dbReference>
<dbReference type="PANTHER" id="PTHR11373:SF32">
    <property type="entry name" value="DEOXYGUANOSINETRIPHOSPHATE TRIPHOSPHOHYDROLASE"/>
    <property type="match status" value="1"/>
</dbReference>
<dbReference type="PANTHER" id="PTHR11373">
    <property type="entry name" value="DEOXYNUCLEOSIDE TRIPHOSPHATE TRIPHOSPHOHYDROLASE"/>
    <property type="match status" value="1"/>
</dbReference>
<dbReference type="Pfam" id="PF01966">
    <property type="entry name" value="HD"/>
    <property type="match status" value="1"/>
</dbReference>
<dbReference type="SMART" id="SM00471">
    <property type="entry name" value="HDc"/>
    <property type="match status" value="1"/>
</dbReference>
<dbReference type="SUPFAM" id="SSF109604">
    <property type="entry name" value="HD-domain/PDEase-like"/>
    <property type="match status" value="1"/>
</dbReference>
<dbReference type="PROSITE" id="PS51831">
    <property type="entry name" value="HD"/>
    <property type="match status" value="1"/>
</dbReference>
<feature type="chain" id="PRO_1000006553" description="Deoxyguanosinetriphosphate triphosphohydrolase">
    <location>
        <begin position="1"/>
        <end position="505"/>
    </location>
</feature>
<feature type="domain" description="HD" evidence="2">
    <location>
        <begin position="66"/>
        <end position="273"/>
    </location>
</feature>